<proteinExistence type="inferred from homology"/>
<comment type="function">
    <text evidence="1">Specifically acetylates 'Lys-40' in alpha-tubulin on the lumenal side of microtubules. Promotes microtubule destabilization and accelerates microtubule dynamics; this activity may be independent of acetylation activity. Acetylates alpha-tubulin with a slow enzymatic rate, due to a catalytic site that is not optimized for acetyl transfer. Enters the microtubule through each end and diffuses quickly throughout the lumen of microtubules. Acetylates only long/old microtubules because of its slow acetylation rate since it does not have time to act on dynamically unstable microtubules before the enzyme is released.</text>
</comment>
<comment type="catalytic activity">
    <reaction evidence="1">
        <text>L-lysyl-[alpha-tubulin] + acetyl-CoA = N(6)-acetyl-L-lysyl-[alpha-tubulin] + CoA + H(+)</text>
        <dbReference type="Rhea" id="RHEA:15277"/>
        <dbReference type="Rhea" id="RHEA-COMP:11278"/>
        <dbReference type="Rhea" id="RHEA-COMP:11279"/>
        <dbReference type="ChEBI" id="CHEBI:15378"/>
        <dbReference type="ChEBI" id="CHEBI:29969"/>
        <dbReference type="ChEBI" id="CHEBI:57287"/>
        <dbReference type="ChEBI" id="CHEBI:57288"/>
        <dbReference type="ChEBI" id="CHEBI:61930"/>
        <dbReference type="EC" id="2.3.1.108"/>
    </reaction>
</comment>
<comment type="similarity">
    <text evidence="1">Belongs to the acetyltransferase ATAT1 family.</text>
</comment>
<accession>A4HE59</accession>
<protein>
    <recommendedName>
        <fullName evidence="1">Alpha-tubulin N-acetyltransferase</fullName>
        <shortName evidence="1">Alpha-TAT</shortName>
        <shortName evidence="1">TAT</shortName>
        <ecNumber evidence="1">2.3.1.108</ecNumber>
    </recommendedName>
    <alternativeName>
        <fullName evidence="1">Acetyltransferase mec-17 homolog</fullName>
    </alternativeName>
</protein>
<evidence type="ECO:0000255" key="1">
    <source>
        <dbReference type="HAMAP-Rule" id="MF_03130"/>
    </source>
</evidence>
<evidence type="ECO:0000256" key="2">
    <source>
        <dbReference type="SAM" id="MobiDB-lite"/>
    </source>
</evidence>
<keyword id="KW-0012">Acyltransferase</keyword>
<keyword id="KW-1185">Reference proteome</keyword>
<keyword id="KW-0808">Transferase</keyword>
<feature type="chain" id="PRO_0000402082" description="Alpha-tubulin N-acetyltransferase">
    <location>
        <begin position="1"/>
        <end position="236"/>
    </location>
</feature>
<feature type="domain" description="N-acetyltransferase" evidence="1">
    <location>
        <begin position="21"/>
        <end position="201"/>
    </location>
</feature>
<feature type="region of interest" description="Disordered" evidence="2">
    <location>
        <begin position="217"/>
        <end position="236"/>
    </location>
</feature>
<feature type="compositionally biased region" description="Low complexity" evidence="2">
    <location>
        <begin position="219"/>
        <end position="229"/>
    </location>
</feature>
<feature type="binding site" evidence="1">
    <location>
        <begin position="134"/>
        <end position="147"/>
    </location>
    <ligand>
        <name>acetyl-CoA</name>
        <dbReference type="ChEBI" id="CHEBI:57288"/>
    </ligand>
</feature>
<feature type="binding site" evidence="1">
    <location>
        <begin position="171"/>
        <end position="180"/>
    </location>
    <ligand>
        <name>acetyl-CoA</name>
        <dbReference type="ChEBI" id="CHEBI:57288"/>
    </ligand>
</feature>
<feature type="site" description="Crucial for catalytic activity" evidence="1">
    <location>
        <position position="73"/>
    </location>
</feature>
<name>ATAT_LEIBR</name>
<dbReference type="EC" id="2.3.1.108" evidence="1"/>
<dbReference type="EMBL" id="FR799000">
    <property type="protein sequence ID" value="CAM39112.1"/>
    <property type="molecule type" value="Genomic_DNA"/>
</dbReference>
<dbReference type="RefSeq" id="XP_001565617.1">
    <property type="nucleotide sequence ID" value="XM_001565567.2"/>
</dbReference>
<dbReference type="SMR" id="A4HE59"/>
<dbReference type="GeneID" id="5416202"/>
<dbReference type="KEGG" id="lbz:LBRM_25_1130"/>
<dbReference type="VEuPathDB" id="TriTrypDB:LbrM.25.1130"/>
<dbReference type="InParanoid" id="A4HE59"/>
<dbReference type="OMA" id="LCCTIDI"/>
<dbReference type="Proteomes" id="UP000007258">
    <property type="component" value="Chromosome 25"/>
</dbReference>
<dbReference type="GO" id="GO:0005874">
    <property type="term" value="C:microtubule"/>
    <property type="evidence" value="ECO:0007669"/>
    <property type="project" value="InterPro"/>
</dbReference>
<dbReference type="GO" id="GO:0019799">
    <property type="term" value="F:tubulin N-acetyltransferase activity"/>
    <property type="evidence" value="ECO:0007669"/>
    <property type="project" value="UniProtKB-UniRule"/>
</dbReference>
<dbReference type="GO" id="GO:0070507">
    <property type="term" value="P:regulation of microtubule cytoskeleton organization"/>
    <property type="evidence" value="ECO:0007669"/>
    <property type="project" value="UniProtKB-UniRule"/>
</dbReference>
<dbReference type="CDD" id="cd04301">
    <property type="entry name" value="NAT_SF"/>
    <property type="match status" value="1"/>
</dbReference>
<dbReference type="FunFam" id="3.40.630.30:FF:000166">
    <property type="entry name" value="Alpha-tubulin N-acetyltransferase"/>
    <property type="match status" value="1"/>
</dbReference>
<dbReference type="Gene3D" id="3.40.630.30">
    <property type="match status" value="1"/>
</dbReference>
<dbReference type="HAMAP" id="MF_03130">
    <property type="entry name" value="mec17"/>
    <property type="match status" value="1"/>
</dbReference>
<dbReference type="InterPro" id="IPR016181">
    <property type="entry name" value="Acyl_CoA_acyltransferase"/>
</dbReference>
<dbReference type="InterPro" id="IPR038746">
    <property type="entry name" value="Atat"/>
</dbReference>
<dbReference type="InterPro" id="IPR007965">
    <property type="entry name" value="GNAT_ATAT"/>
</dbReference>
<dbReference type="PANTHER" id="PTHR12327">
    <property type="entry name" value="ALPHA-TUBULIN N-ACETYLTRANSFERASE 1"/>
    <property type="match status" value="1"/>
</dbReference>
<dbReference type="PANTHER" id="PTHR12327:SF0">
    <property type="entry name" value="ALPHA-TUBULIN N-ACETYLTRANSFERASE 1"/>
    <property type="match status" value="1"/>
</dbReference>
<dbReference type="Pfam" id="PF05301">
    <property type="entry name" value="Acetyltransf_16"/>
    <property type="match status" value="1"/>
</dbReference>
<dbReference type="SUPFAM" id="SSF55729">
    <property type="entry name" value="Acyl-CoA N-acyltransferases (Nat)"/>
    <property type="match status" value="1"/>
</dbReference>
<dbReference type="PROSITE" id="PS51730">
    <property type="entry name" value="GNAT_ATAT"/>
    <property type="match status" value="1"/>
</dbReference>
<gene>
    <name type="ORF">LbrM25_V2.1130</name>
    <name type="ORF">LbrM_25_1130</name>
</gene>
<organism>
    <name type="scientific">Leishmania braziliensis</name>
    <dbReference type="NCBI Taxonomy" id="5660"/>
    <lineage>
        <taxon>Eukaryota</taxon>
        <taxon>Discoba</taxon>
        <taxon>Euglenozoa</taxon>
        <taxon>Kinetoplastea</taxon>
        <taxon>Metakinetoplastina</taxon>
        <taxon>Trypanosomatida</taxon>
        <taxon>Trypanosomatidae</taxon>
        <taxon>Leishmaniinae</taxon>
        <taxon>Leishmania</taxon>
        <taxon>Leishmania braziliensis species complex</taxon>
    </lineage>
</organism>
<sequence length="236" mass="25941">MRLSAQLTNTKLADEEVPELASVPDGVSRWTGADLDRLRSAARRGGVGAEQQDLEQKLCRTIDILGARSQKTQGINAVLTSVARLRESNTFRLYLLTQNHRGVGILKMGVKKLFVTHPVTCGLVEVDPLCVLDFYVDESCQRQGYGKQLYAHMLDAEHVSRPELLAIDRPSDKLLGFMKKHYGLTAYTPQVNKFVVFHGFFGHTTVSERGKLLRTTSPTGAAAAATGTKAKNEMPG</sequence>
<reference key="1">
    <citation type="journal article" date="2007" name="Nat. Genet.">
        <title>Comparative genomic analysis of three Leishmania species that cause diverse human disease.</title>
        <authorList>
            <person name="Peacock C.S."/>
            <person name="Seeger K."/>
            <person name="Harris D."/>
            <person name="Murphy L."/>
            <person name="Ruiz J.C."/>
            <person name="Quail M.A."/>
            <person name="Peters N."/>
            <person name="Adlem E."/>
            <person name="Tivey A."/>
            <person name="Aslett M."/>
            <person name="Kerhornou A."/>
            <person name="Ivens A."/>
            <person name="Fraser A."/>
            <person name="Rajandream M.-A."/>
            <person name="Carver T."/>
            <person name="Norbertczak H."/>
            <person name="Chillingworth T."/>
            <person name="Hance Z."/>
            <person name="Jagels K."/>
            <person name="Moule S."/>
            <person name="Ormond D."/>
            <person name="Rutter S."/>
            <person name="Sqaures R."/>
            <person name="Whitehead S."/>
            <person name="Rabbinowitsch E."/>
            <person name="Arrowsmith C."/>
            <person name="White B."/>
            <person name="Thurston S."/>
            <person name="Bringaud F."/>
            <person name="Baldauf S.L."/>
            <person name="Faulconbridge A."/>
            <person name="Jeffares D."/>
            <person name="Depledge D.P."/>
            <person name="Oyola S.O."/>
            <person name="Hilley J.D."/>
            <person name="Brito L.O."/>
            <person name="Tosi L.R.O."/>
            <person name="Barrell B."/>
            <person name="Cruz A.K."/>
            <person name="Mottram J.C."/>
            <person name="Smith D.F."/>
            <person name="Berriman M."/>
        </authorList>
    </citation>
    <scope>NUCLEOTIDE SEQUENCE [LARGE SCALE GENOMIC DNA]</scope>
    <source>
        <strain>MHOM/BR/75/M2904</strain>
    </source>
</reference>